<organism>
    <name type="scientific">Shigella flexneri</name>
    <dbReference type="NCBI Taxonomy" id="623"/>
    <lineage>
        <taxon>Bacteria</taxon>
        <taxon>Pseudomonadati</taxon>
        <taxon>Pseudomonadota</taxon>
        <taxon>Gammaproteobacteria</taxon>
        <taxon>Enterobacterales</taxon>
        <taxon>Enterobacteriaceae</taxon>
        <taxon>Shigella</taxon>
    </lineage>
</organism>
<gene>
    <name evidence="1" type="primary">dut</name>
    <name type="ordered locus">SF3679</name>
    <name type="ordered locus">S4089</name>
</gene>
<reference key="1">
    <citation type="journal article" date="2002" name="Nucleic Acids Res.">
        <title>Genome sequence of Shigella flexneri 2a: insights into pathogenicity through comparison with genomes of Escherichia coli K12 and O157.</title>
        <authorList>
            <person name="Jin Q."/>
            <person name="Yuan Z."/>
            <person name="Xu J."/>
            <person name="Wang Y."/>
            <person name="Shen Y."/>
            <person name="Lu W."/>
            <person name="Wang J."/>
            <person name="Liu H."/>
            <person name="Yang J."/>
            <person name="Yang F."/>
            <person name="Zhang X."/>
            <person name="Zhang J."/>
            <person name="Yang G."/>
            <person name="Wu H."/>
            <person name="Qu D."/>
            <person name="Dong J."/>
            <person name="Sun L."/>
            <person name="Xue Y."/>
            <person name="Zhao A."/>
            <person name="Gao Y."/>
            <person name="Zhu J."/>
            <person name="Kan B."/>
            <person name="Ding K."/>
            <person name="Chen S."/>
            <person name="Cheng H."/>
            <person name="Yao Z."/>
            <person name="He B."/>
            <person name="Chen R."/>
            <person name="Ma D."/>
            <person name="Qiang B."/>
            <person name="Wen Y."/>
            <person name="Hou Y."/>
            <person name="Yu J."/>
        </authorList>
    </citation>
    <scope>NUCLEOTIDE SEQUENCE [LARGE SCALE GENOMIC DNA]</scope>
    <source>
        <strain>301 / Serotype 2a</strain>
    </source>
</reference>
<reference key="2">
    <citation type="journal article" date="2003" name="Infect. Immun.">
        <title>Complete genome sequence and comparative genomics of Shigella flexneri serotype 2a strain 2457T.</title>
        <authorList>
            <person name="Wei J."/>
            <person name="Goldberg M.B."/>
            <person name="Burland V."/>
            <person name="Venkatesan M.M."/>
            <person name="Deng W."/>
            <person name="Fournier G."/>
            <person name="Mayhew G.F."/>
            <person name="Plunkett G. III"/>
            <person name="Rose D.J."/>
            <person name="Darling A."/>
            <person name="Mau B."/>
            <person name="Perna N.T."/>
            <person name="Payne S.M."/>
            <person name="Runyen-Janecky L.J."/>
            <person name="Zhou S."/>
            <person name="Schwartz D.C."/>
            <person name="Blattner F.R."/>
        </authorList>
    </citation>
    <scope>NUCLEOTIDE SEQUENCE [LARGE SCALE GENOMIC DNA]</scope>
    <source>
        <strain>ATCC 700930 / 2457T / Serotype 2a</strain>
    </source>
</reference>
<feature type="chain" id="PRO_0000182908" description="Deoxyuridine 5'-triphosphate nucleotidohydrolase">
    <location>
        <begin position="1"/>
        <end position="152"/>
    </location>
</feature>
<feature type="binding site" evidence="1">
    <location>
        <begin position="71"/>
        <end position="73"/>
    </location>
    <ligand>
        <name>substrate</name>
    </ligand>
</feature>
<feature type="binding site" evidence="1">
    <location>
        <position position="84"/>
    </location>
    <ligand>
        <name>substrate</name>
    </ligand>
</feature>
<feature type="binding site" evidence="1">
    <location>
        <begin position="88"/>
        <end position="90"/>
    </location>
    <ligand>
        <name>substrate</name>
    </ligand>
</feature>
<feature type="binding site" evidence="1">
    <location>
        <position position="98"/>
    </location>
    <ligand>
        <name>substrate</name>
    </ligand>
</feature>
<keyword id="KW-0378">Hydrolase</keyword>
<keyword id="KW-0460">Magnesium</keyword>
<keyword id="KW-0479">Metal-binding</keyword>
<keyword id="KW-0546">Nucleotide metabolism</keyword>
<keyword id="KW-1185">Reference proteome</keyword>
<name>DUT_SHIFL</name>
<protein>
    <recommendedName>
        <fullName evidence="1">Deoxyuridine 5'-triphosphate nucleotidohydrolase</fullName>
        <shortName evidence="1">dUTPase</shortName>
        <ecNumber evidence="1">3.6.1.23</ecNumber>
    </recommendedName>
    <alternativeName>
        <fullName evidence="1">dUTP pyrophosphatase</fullName>
    </alternativeName>
</protein>
<evidence type="ECO:0000255" key="1">
    <source>
        <dbReference type="HAMAP-Rule" id="MF_00116"/>
    </source>
</evidence>
<sequence>MMKKIDVKILDPRVRKEFPLPTYATSGSAGLDLRACLDDAVELAPGDTTLVPTGLAIHIADPSLAAMMLPRSGLGHKHGIVLGNLVGLIDSDYQGQLMISVWNRGQDSFTIQPGERIAQMIFVPVVQAEFNLVEDFDATDRGEGGFGHSGRQ</sequence>
<proteinExistence type="inferred from homology"/>
<dbReference type="EC" id="3.6.1.23" evidence="1"/>
<dbReference type="EMBL" id="AE005674">
    <property type="protein sequence ID" value="AAN45126.1"/>
    <property type="molecule type" value="Genomic_DNA"/>
</dbReference>
<dbReference type="EMBL" id="AE014073">
    <property type="protein sequence ID" value="AAP19066.1"/>
    <property type="molecule type" value="Genomic_DNA"/>
</dbReference>
<dbReference type="RefSeq" id="NP_709419.1">
    <property type="nucleotide sequence ID" value="NC_004337.2"/>
</dbReference>
<dbReference type="RefSeq" id="WP_000976081.1">
    <property type="nucleotide sequence ID" value="NZ_WPGW01000042.1"/>
</dbReference>
<dbReference type="SMR" id="Q83PN3"/>
<dbReference type="STRING" id="198214.SF3679"/>
<dbReference type="PaxDb" id="198214-SF3679"/>
<dbReference type="GeneID" id="1026233"/>
<dbReference type="KEGG" id="sfl:SF3679"/>
<dbReference type="KEGG" id="sfx:S4089"/>
<dbReference type="PATRIC" id="fig|198214.7.peg.4342"/>
<dbReference type="HOGENOM" id="CLU_068508_1_1_6"/>
<dbReference type="UniPathway" id="UPA00610">
    <property type="reaction ID" value="UER00666"/>
</dbReference>
<dbReference type="Proteomes" id="UP000001006">
    <property type="component" value="Chromosome"/>
</dbReference>
<dbReference type="Proteomes" id="UP000002673">
    <property type="component" value="Chromosome"/>
</dbReference>
<dbReference type="GO" id="GO:0004170">
    <property type="term" value="F:dUTP diphosphatase activity"/>
    <property type="evidence" value="ECO:0007669"/>
    <property type="project" value="UniProtKB-UniRule"/>
</dbReference>
<dbReference type="GO" id="GO:0000287">
    <property type="term" value="F:magnesium ion binding"/>
    <property type="evidence" value="ECO:0007669"/>
    <property type="project" value="UniProtKB-UniRule"/>
</dbReference>
<dbReference type="GO" id="GO:0006226">
    <property type="term" value="P:dUMP biosynthetic process"/>
    <property type="evidence" value="ECO:0007669"/>
    <property type="project" value="UniProtKB-UniRule"/>
</dbReference>
<dbReference type="GO" id="GO:0046081">
    <property type="term" value="P:dUTP catabolic process"/>
    <property type="evidence" value="ECO:0007669"/>
    <property type="project" value="InterPro"/>
</dbReference>
<dbReference type="CDD" id="cd07557">
    <property type="entry name" value="trimeric_dUTPase"/>
    <property type="match status" value="1"/>
</dbReference>
<dbReference type="FunFam" id="2.70.40.10:FF:000002">
    <property type="entry name" value="dUTP diphosphatase"/>
    <property type="match status" value="1"/>
</dbReference>
<dbReference type="Gene3D" id="2.70.40.10">
    <property type="match status" value="1"/>
</dbReference>
<dbReference type="HAMAP" id="MF_00116">
    <property type="entry name" value="dUTPase_bact"/>
    <property type="match status" value="1"/>
</dbReference>
<dbReference type="InterPro" id="IPR008181">
    <property type="entry name" value="dUTPase"/>
</dbReference>
<dbReference type="InterPro" id="IPR029054">
    <property type="entry name" value="dUTPase-like"/>
</dbReference>
<dbReference type="InterPro" id="IPR036157">
    <property type="entry name" value="dUTPase-like_sf"/>
</dbReference>
<dbReference type="InterPro" id="IPR033704">
    <property type="entry name" value="dUTPase_trimeric"/>
</dbReference>
<dbReference type="NCBIfam" id="TIGR00576">
    <property type="entry name" value="dut"/>
    <property type="match status" value="1"/>
</dbReference>
<dbReference type="NCBIfam" id="NF001862">
    <property type="entry name" value="PRK00601.1"/>
    <property type="match status" value="1"/>
</dbReference>
<dbReference type="PANTHER" id="PTHR11241">
    <property type="entry name" value="DEOXYURIDINE 5'-TRIPHOSPHATE NUCLEOTIDOHYDROLASE"/>
    <property type="match status" value="1"/>
</dbReference>
<dbReference type="PANTHER" id="PTHR11241:SF0">
    <property type="entry name" value="DEOXYURIDINE 5'-TRIPHOSPHATE NUCLEOTIDOHYDROLASE"/>
    <property type="match status" value="1"/>
</dbReference>
<dbReference type="Pfam" id="PF00692">
    <property type="entry name" value="dUTPase"/>
    <property type="match status" value="1"/>
</dbReference>
<dbReference type="SUPFAM" id="SSF51283">
    <property type="entry name" value="dUTPase-like"/>
    <property type="match status" value="1"/>
</dbReference>
<comment type="function">
    <text evidence="1">This enzyme is involved in nucleotide metabolism: it produces dUMP, the immediate precursor of thymidine nucleotides and it decreases the intracellular concentration of dUTP so that uracil cannot be incorporated into DNA.</text>
</comment>
<comment type="catalytic activity">
    <reaction evidence="1">
        <text>dUTP + H2O = dUMP + diphosphate + H(+)</text>
        <dbReference type="Rhea" id="RHEA:10248"/>
        <dbReference type="ChEBI" id="CHEBI:15377"/>
        <dbReference type="ChEBI" id="CHEBI:15378"/>
        <dbReference type="ChEBI" id="CHEBI:33019"/>
        <dbReference type="ChEBI" id="CHEBI:61555"/>
        <dbReference type="ChEBI" id="CHEBI:246422"/>
        <dbReference type="EC" id="3.6.1.23"/>
    </reaction>
</comment>
<comment type="cofactor">
    <cofactor evidence="1">
        <name>Mg(2+)</name>
        <dbReference type="ChEBI" id="CHEBI:18420"/>
    </cofactor>
</comment>
<comment type="pathway">
    <text evidence="1">Pyrimidine metabolism; dUMP biosynthesis; dUMP from dCTP (dUTP route): step 2/2.</text>
</comment>
<comment type="similarity">
    <text evidence="1">Belongs to the dUTPase family.</text>
</comment>
<accession>Q83PN3</accession>